<reference key="1">
    <citation type="journal article" date="2010" name="J. Bacteriol.">
        <title>Genome sequence of the deep-rooted Yersinia pestis strain Angola reveals new insights into the evolution and pangenome of the plague bacterium.</title>
        <authorList>
            <person name="Eppinger M."/>
            <person name="Worsham P.L."/>
            <person name="Nikolich M.P."/>
            <person name="Riley D.R."/>
            <person name="Sebastian Y."/>
            <person name="Mou S."/>
            <person name="Achtman M."/>
            <person name="Lindler L.E."/>
            <person name="Ravel J."/>
        </authorList>
    </citation>
    <scope>NUCLEOTIDE SEQUENCE [LARGE SCALE GENOMIC DNA]</scope>
    <source>
        <strain>Angola</strain>
    </source>
</reference>
<accession>A9R474</accession>
<comment type="function">
    <text evidence="1">Regulatory subunit of a potassium efflux system that confers protection against electrophiles. Required for full activity of KefB.</text>
</comment>
<comment type="catalytic activity">
    <reaction evidence="1">
        <text>a quinone + NADH + H(+) = a quinol + NAD(+)</text>
        <dbReference type="Rhea" id="RHEA:46160"/>
        <dbReference type="ChEBI" id="CHEBI:15378"/>
        <dbReference type="ChEBI" id="CHEBI:24646"/>
        <dbReference type="ChEBI" id="CHEBI:57540"/>
        <dbReference type="ChEBI" id="CHEBI:57945"/>
        <dbReference type="ChEBI" id="CHEBI:132124"/>
        <dbReference type="EC" id="1.6.5.2"/>
    </reaction>
</comment>
<comment type="catalytic activity">
    <reaction evidence="1">
        <text>a quinone + NADPH + H(+) = a quinol + NADP(+)</text>
        <dbReference type="Rhea" id="RHEA:46164"/>
        <dbReference type="ChEBI" id="CHEBI:15378"/>
        <dbReference type="ChEBI" id="CHEBI:24646"/>
        <dbReference type="ChEBI" id="CHEBI:57783"/>
        <dbReference type="ChEBI" id="CHEBI:58349"/>
        <dbReference type="ChEBI" id="CHEBI:132124"/>
        <dbReference type="EC" id="1.6.5.2"/>
    </reaction>
</comment>
<comment type="subunit">
    <text evidence="1">Interacts with KefB.</text>
</comment>
<comment type="subcellular location">
    <subcellularLocation>
        <location evidence="1">Cell inner membrane</location>
        <topology evidence="1">Peripheral membrane protein</topology>
        <orientation evidence="1">Cytoplasmic side</orientation>
    </subcellularLocation>
</comment>
<comment type="similarity">
    <text evidence="1">Belongs to the NAD(P)H dehydrogenase (quinone) family. KefG subfamily.</text>
</comment>
<protein>
    <recommendedName>
        <fullName evidence="1">Glutathione-regulated potassium-efflux system ancillary protein KefG</fullName>
    </recommendedName>
    <alternativeName>
        <fullName evidence="1">Putative quinone oxidoreductase KefG</fullName>
        <ecNumber evidence="1">1.6.5.2</ecNumber>
    </alternativeName>
</protein>
<sequence length="183" mass="21332">MMLQPPKVLLLYAHPESQDSVANRVLLQPVQQLEHVTVHDLYAHYPDFFIDIHHEQQLLRDHQVIVFQHPLYTYSCPALLKEWLDRVLARGFANGVGGHALTGKHWRSVITTGEQEGTYRIGGYNRYPMEDILRPFELTAAMCHMHWINPMIIYWARRQKPETLASHAQAYVQWLQSPLTRGL</sequence>
<proteinExistence type="inferred from homology"/>
<organism>
    <name type="scientific">Yersinia pestis bv. Antiqua (strain Angola)</name>
    <dbReference type="NCBI Taxonomy" id="349746"/>
    <lineage>
        <taxon>Bacteria</taxon>
        <taxon>Pseudomonadati</taxon>
        <taxon>Pseudomonadota</taxon>
        <taxon>Gammaproteobacteria</taxon>
        <taxon>Enterobacterales</taxon>
        <taxon>Yersiniaceae</taxon>
        <taxon>Yersinia</taxon>
    </lineage>
</organism>
<dbReference type="EC" id="1.6.5.2" evidence="1"/>
<dbReference type="EMBL" id="CP000901">
    <property type="protein sequence ID" value="ABX87694.1"/>
    <property type="molecule type" value="Genomic_DNA"/>
</dbReference>
<dbReference type="SMR" id="A9R474"/>
<dbReference type="KEGG" id="ypg:YpAngola_A3688"/>
<dbReference type="GO" id="GO:0005886">
    <property type="term" value="C:plasma membrane"/>
    <property type="evidence" value="ECO:0007669"/>
    <property type="project" value="UniProtKB-SubCell"/>
</dbReference>
<dbReference type="GO" id="GO:0009055">
    <property type="term" value="F:electron transfer activity"/>
    <property type="evidence" value="ECO:0007669"/>
    <property type="project" value="TreeGrafter"/>
</dbReference>
<dbReference type="GO" id="GO:0010181">
    <property type="term" value="F:FMN binding"/>
    <property type="evidence" value="ECO:0007669"/>
    <property type="project" value="TreeGrafter"/>
</dbReference>
<dbReference type="GO" id="GO:0050136">
    <property type="term" value="F:NADH:ubiquinone reductase (non-electrogenic) activity"/>
    <property type="evidence" value="ECO:0007669"/>
    <property type="project" value="RHEA"/>
</dbReference>
<dbReference type="GO" id="GO:0008753">
    <property type="term" value="F:NADPH dehydrogenase (quinone) activity"/>
    <property type="evidence" value="ECO:0007669"/>
    <property type="project" value="RHEA"/>
</dbReference>
<dbReference type="GO" id="GO:1901381">
    <property type="term" value="P:positive regulation of potassium ion transmembrane transport"/>
    <property type="evidence" value="ECO:0007669"/>
    <property type="project" value="UniProtKB-UniRule"/>
</dbReference>
<dbReference type="GO" id="GO:0006813">
    <property type="term" value="P:potassium ion transport"/>
    <property type="evidence" value="ECO:0007669"/>
    <property type="project" value="InterPro"/>
</dbReference>
<dbReference type="FunFam" id="3.40.50.360:FF:000013">
    <property type="entry name" value="Glutathione-regulated potassium-efflux system ancillary protein KefG"/>
    <property type="match status" value="1"/>
</dbReference>
<dbReference type="Gene3D" id="3.40.50.360">
    <property type="match status" value="1"/>
</dbReference>
<dbReference type="HAMAP" id="MF_01415">
    <property type="entry name" value="K_H_efflux_KefG"/>
    <property type="match status" value="1"/>
</dbReference>
<dbReference type="InterPro" id="IPR003680">
    <property type="entry name" value="Flavodoxin_fold"/>
</dbReference>
<dbReference type="InterPro" id="IPR029039">
    <property type="entry name" value="Flavoprotein-like_sf"/>
</dbReference>
<dbReference type="InterPro" id="IPR023947">
    <property type="entry name" value="K_H_efflux_KefG"/>
</dbReference>
<dbReference type="InterPro" id="IPR046980">
    <property type="entry name" value="KefG/KefF"/>
</dbReference>
<dbReference type="NCBIfam" id="NF003430">
    <property type="entry name" value="PRK04930.1"/>
    <property type="match status" value="1"/>
</dbReference>
<dbReference type="PANTHER" id="PTHR47307">
    <property type="entry name" value="GLUTATHIONE-REGULATED POTASSIUM-EFFLUX SYSTEM ANCILLARY PROTEIN KEFG"/>
    <property type="match status" value="1"/>
</dbReference>
<dbReference type="PANTHER" id="PTHR47307:SF1">
    <property type="entry name" value="GLUTATHIONE-REGULATED POTASSIUM-EFFLUX SYSTEM ANCILLARY PROTEIN KEFG"/>
    <property type="match status" value="1"/>
</dbReference>
<dbReference type="Pfam" id="PF02525">
    <property type="entry name" value="Flavodoxin_2"/>
    <property type="match status" value="1"/>
</dbReference>
<dbReference type="SUPFAM" id="SSF52218">
    <property type="entry name" value="Flavoproteins"/>
    <property type="match status" value="1"/>
</dbReference>
<evidence type="ECO:0000255" key="1">
    <source>
        <dbReference type="HAMAP-Rule" id="MF_01415"/>
    </source>
</evidence>
<gene>
    <name evidence="1" type="primary">kefG</name>
    <name type="ordered locus">YpAngola_A3688</name>
</gene>
<keyword id="KW-0997">Cell inner membrane</keyword>
<keyword id="KW-1003">Cell membrane</keyword>
<keyword id="KW-0472">Membrane</keyword>
<keyword id="KW-0520">NAD</keyword>
<keyword id="KW-0560">Oxidoreductase</keyword>
<feature type="chain" id="PRO_1000145590" description="Glutathione-regulated potassium-efflux system ancillary protein KefG">
    <location>
        <begin position="1"/>
        <end position="183"/>
    </location>
</feature>
<name>KEFG_YERPG</name>